<reference key="1">
    <citation type="submission" date="2007-11" db="EMBL/GenBank/DDBJ databases">
        <title>Genome sequencing of phylogenetically and phenotypically diverse Coxiella burnetii isolates.</title>
        <authorList>
            <person name="Seshadri R."/>
            <person name="Samuel J.E."/>
        </authorList>
    </citation>
    <scope>NUCLEOTIDE SEQUENCE [LARGE SCALE GENOMIC DNA]</scope>
    <source>
        <strain>RSA 331 / Henzerling II</strain>
    </source>
</reference>
<comment type="function">
    <text evidence="1">DNA-dependent RNA polymerase catalyzes the transcription of DNA into RNA using the four ribonucleoside triphosphates as substrates.</text>
</comment>
<comment type="catalytic activity">
    <reaction evidence="1">
        <text>RNA(n) + a ribonucleoside 5'-triphosphate = RNA(n+1) + diphosphate</text>
        <dbReference type="Rhea" id="RHEA:21248"/>
        <dbReference type="Rhea" id="RHEA-COMP:14527"/>
        <dbReference type="Rhea" id="RHEA-COMP:17342"/>
        <dbReference type="ChEBI" id="CHEBI:33019"/>
        <dbReference type="ChEBI" id="CHEBI:61557"/>
        <dbReference type="ChEBI" id="CHEBI:140395"/>
        <dbReference type="EC" id="2.7.7.6"/>
    </reaction>
</comment>
<comment type="cofactor">
    <cofactor evidence="1">
        <name>Mg(2+)</name>
        <dbReference type="ChEBI" id="CHEBI:18420"/>
    </cofactor>
    <text evidence="1">Binds 1 Mg(2+) ion per subunit.</text>
</comment>
<comment type="cofactor">
    <cofactor evidence="1">
        <name>Zn(2+)</name>
        <dbReference type="ChEBI" id="CHEBI:29105"/>
    </cofactor>
    <text evidence="1">Binds 2 Zn(2+) ions per subunit.</text>
</comment>
<comment type="subunit">
    <text evidence="1">The RNAP catalytic core consists of 2 alpha, 1 beta, 1 beta' and 1 omega subunit. When a sigma factor is associated with the core the holoenzyme is formed, which can initiate transcription.</text>
</comment>
<comment type="similarity">
    <text evidence="1">Belongs to the RNA polymerase beta' chain family.</text>
</comment>
<keyword id="KW-0240">DNA-directed RNA polymerase</keyword>
<keyword id="KW-0460">Magnesium</keyword>
<keyword id="KW-0479">Metal-binding</keyword>
<keyword id="KW-0548">Nucleotidyltransferase</keyword>
<keyword id="KW-0804">Transcription</keyword>
<keyword id="KW-0808">Transferase</keyword>
<keyword id="KW-0862">Zinc</keyword>
<name>RPOC_COXBR</name>
<protein>
    <recommendedName>
        <fullName evidence="1">DNA-directed RNA polymerase subunit beta'</fullName>
        <shortName evidence="1">RNAP subunit beta'</shortName>
        <ecNumber evidence="1">2.7.7.6</ecNumber>
    </recommendedName>
    <alternativeName>
        <fullName evidence="1">RNA polymerase subunit beta'</fullName>
    </alternativeName>
    <alternativeName>
        <fullName evidence="1">Transcriptase subunit beta'</fullName>
    </alternativeName>
</protein>
<dbReference type="EC" id="2.7.7.6" evidence="1"/>
<dbReference type="EMBL" id="CP000890">
    <property type="protein sequence ID" value="ABX77246.1"/>
    <property type="molecule type" value="Genomic_DNA"/>
</dbReference>
<dbReference type="RefSeq" id="WP_010957448.1">
    <property type="nucleotide sequence ID" value="NC_010117.1"/>
</dbReference>
<dbReference type="SMR" id="A9NAL6"/>
<dbReference type="KEGG" id="cbs:COXBURSA331_A0329"/>
<dbReference type="HOGENOM" id="CLU_000524_3_1_6"/>
<dbReference type="GO" id="GO:0000428">
    <property type="term" value="C:DNA-directed RNA polymerase complex"/>
    <property type="evidence" value="ECO:0007669"/>
    <property type="project" value="UniProtKB-KW"/>
</dbReference>
<dbReference type="GO" id="GO:0003677">
    <property type="term" value="F:DNA binding"/>
    <property type="evidence" value="ECO:0007669"/>
    <property type="project" value="UniProtKB-UniRule"/>
</dbReference>
<dbReference type="GO" id="GO:0003899">
    <property type="term" value="F:DNA-directed RNA polymerase activity"/>
    <property type="evidence" value="ECO:0007669"/>
    <property type="project" value="UniProtKB-UniRule"/>
</dbReference>
<dbReference type="GO" id="GO:0000287">
    <property type="term" value="F:magnesium ion binding"/>
    <property type="evidence" value="ECO:0007669"/>
    <property type="project" value="UniProtKB-UniRule"/>
</dbReference>
<dbReference type="GO" id="GO:0008270">
    <property type="term" value="F:zinc ion binding"/>
    <property type="evidence" value="ECO:0007669"/>
    <property type="project" value="UniProtKB-UniRule"/>
</dbReference>
<dbReference type="GO" id="GO:0006351">
    <property type="term" value="P:DNA-templated transcription"/>
    <property type="evidence" value="ECO:0007669"/>
    <property type="project" value="UniProtKB-UniRule"/>
</dbReference>
<dbReference type="CDD" id="cd02655">
    <property type="entry name" value="RNAP_beta'_C"/>
    <property type="match status" value="1"/>
</dbReference>
<dbReference type="CDD" id="cd01609">
    <property type="entry name" value="RNAP_beta'_N"/>
    <property type="match status" value="1"/>
</dbReference>
<dbReference type="FunFam" id="1.10.132.30:FF:000003">
    <property type="entry name" value="DNA-directed RNA polymerase subunit beta"/>
    <property type="match status" value="1"/>
</dbReference>
<dbReference type="FunFam" id="1.10.150.390:FF:000002">
    <property type="entry name" value="DNA-directed RNA polymerase subunit beta"/>
    <property type="match status" value="1"/>
</dbReference>
<dbReference type="FunFam" id="4.10.860.120:FF:000001">
    <property type="entry name" value="DNA-directed RNA polymerase subunit beta"/>
    <property type="match status" value="1"/>
</dbReference>
<dbReference type="Gene3D" id="1.10.132.30">
    <property type="match status" value="1"/>
</dbReference>
<dbReference type="Gene3D" id="1.10.150.390">
    <property type="match status" value="1"/>
</dbReference>
<dbReference type="Gene3D" id="1.10.1790.20">
    <property type="match status" value="1"/>
</dbReference>
<dbReference type="Gene3D" id="1.10.40.90">
    <property type="match status" value="1"/>
</dbReference>
<dbReference type="Gene3D" id="2.40.40.20">
    <property type="match status" value="1"/>
</dbReference>
<dbReference type="Gene3D" id="2.40.50.100">
    <property type="match status" value="3"/>
</dbReference>
<dbReference type="Gene3D" id="4.10.860.120">
    <property type="entry name" value="RNA polymerase II, clamp domain"/>
    <property type="match status" value="1"/>
</dbReference>
<dbReference type="Gene3D" id="1.10.274.100">
    <property type="entry name" value="RNA polymerase Rpb1, domain 3"/>
    <property type="match status" value="1"/>
</dbReference>
<dbReference type="HAMAP" id="MF_01322">
    <property type="entry name" value="RNApol_bact_RpoC"/>
    <property type="match status" value="1"/>
</dbReference>
<dbReference type="InterPro" id="IPR045867">
    <property type="entry name" value="DNA-dir_RpoC_beta_prime"/>
</dbReference>
<dbReference type="InterPro" id="IPR012754">
    <property type="entry name" value="DNA-dir_RpoC_beta_prime_bact"/>
</dbReference>
<dbReference type="InterPro" id="IPR000722">
    <property type="entry name" value="RNA_pol_asu"/>
</dbReference>
<dbReference type="InterPro" id="IPR006592">
    <property type="entry name" value="RNA_pol_N"/>
</dbReference>
<dbReference type="InterPro" id="IPR007080">
    <property type="entry name" value="RNA_pol_Rpb1_1"/>
</dbReference>
<dbReference type="InterPro" id="IPR007066">
    <property type="entry name" value="RNA_pol_Rpb1_3"/>
</dbReference>
<dbReference type="InterPro" id="IPR042102">
    <property type="entry name" value="RNA_pol_Rpb1_3_sf"/>
</dbReference>
<dbReference type="InterPro" id="IPR007083">
    <property type="entry name" value="RNA_pol_Rpb1_4"/>
</dbReference>
<dbReference type="InterPro" id="IPR007081">
    <property type="entry name" value="RNA_pol_Rpb1_5"/>
</dbReference>
<dbReference type="InterPro" id="IPR044893">
    <property type="entry name" value="RNA_pol_Rpb1_clamp_domain"/>
</dbReference>
<dbReference type="InterPro" id="IPR038120">
    <property type="entry name" value="Rpb1_funnel_sf"/>
</dbReference>
<dbReference type="NCBIfam" id="TIGR02386">
    <property type="entry name" value="rpoC_TIGR"/>
    <property type="match status" value="1"/>
</dbReference>
<dbReference type="PANTHER" id="PTHR19376">
    <property type="entry name" value="DNA-DIRECTED RNA POLYMERASE"/>
    <property type="match status" value="1"/>
</dbReference>
<dbReference type="PANTHER" id="PTHR19376:SF54">
    <property type="entry name" value="DNA-DIRECTED RNA POLYMERASE SUBUNIT BETA"/>
    <property type="match status" value="1"/>
</dbReference>
<dbReference type="Pfam" id="PF04997">
    <property type="entry name" value="RNA_pol_Rpb1_1"/>
    <property type="match status" value="1"/>
</dbReference>
<dbReference type="Pfam" id="PF00623">
    <property type="entry name" value="RNA_pol_Rpb1_2"/>
    <property type="match status" value="1"/>
</dbReference>
<dbReference type="Pfam" id="PF04983">
    <property type="entry name" value="RNA_pol_Rpb1_3"/>
    <property type="match status" value="1"/>
</dbReference>
<dbReference type="Pfam" id="PF05000">
    <property type="entry name" value="RNA_pol_Rpb1_4"/>
    <property type="match status" value="1"/>
</dbReference>
<dbReference type="Pfam" id="PF04998">
    <property type="entry name" value="RNA_pol_Rpb1_5"/>
    <property type="match status" value="1"/>
</dbReference>
<dbReference type="SMART" id="SM00663">
    <property type="entry name" value="RPOLA_N"/>
    <property type="match status" value="1"/>
</dbReference>
<dbReference type="SUPFAM" id="SSF64484">
    <property type="entry name" value="beta and beta-prime subunits of DNA dependent RNA-polymerase"/>
    <property type="match status" value="1"/>
</dbReference>
<organism>
    <name type="scientific">Coxiella burnetii (strain RSA 331 / Henzerling II)</name>
    <dbReference type="NCBI Taxonomy" id="360115"/>
    <lineage>
        <taxon>Bacteria</taxon>
        <taxon>Pseudomonadati</taxon>
        <taxon>Pseudomonadota</taxon>
        <taxon>Gammaproteobacteria</taxon>
        <taxon>Legionellales</taxon>
        <taxon>Coxiellaceae</taxon>
        <taxon>Coxiella</taxon>
    </lineage>
</organism>
<gene>
    <name evidence="1" type="primary">rpoC</name>
    <name type="ordered locus">COXBURSA331_A0329</name>
</gene>
<sequence length="1414" mass="157104">MRDLVKQLKSEKHTAEFDALRIKLASPEEVRSWSYGEVKKPETINYRTFKPEREGLFCAKIFGPIKDYECLCGKYKRLKHRGVICEKCGVEVTLAKVRRERMGHIELASPVAHIWYLKSLPSRIGLLLDVTLRDIERILYFEAYVVVDPGMTDLEPRQLLSEEAYLDALEEYGDDFTALMGAEAIQRLLRDIDVEAEVEALRTELQTTTSETKTKKLTKRLKVLSAFLESGNKPEWMILTVLPVLPPDLRPLVPLDGGRFATSDLNDLYRRVINRNNRLKRLLDLNAPDIIVRNEKRMLQEAVDALLDNGRRGRAILGSNRRQLKSLADMIKGKSGRFRQNLLGKRVDYSGRSVIVVGPTLKLHQAGLPKKMALELFKPFIFSKLQLRGLATTVKAAKKLVENEGPEVWDILEEVIREHPILLNRAPTLHRLGIQAFEPVLVEGKAIQLHPLVCTAYNADFDGDQMAVHVPLTLEAQLEARSLMMSTNNVLHPANGEPIIVPSQDVVLGLYYITRDRVNAKGEGMRFADAQEVVRAYENDQVDLHARITVRIKEGILNEAGEIEESDRLVNTAAGRILLWQIVPKGLPFALVDQPMTKKAVTKLLDFCYRNLGLKTTVIFADKLMYMGFHYATHSGVSIGINDLVVPDQKEAIISRAEDEVREIEKQYASGLVTHGERRNKVIDIWSRTNDQVAKAMMEKIAVEKVKDAEGKEVAQSSFNSIYMMSDSGARGSAAQTRQLAGMRGLMARPDGTIIETPITANFREGLNVLQYFISTHGARKGLADTALKTANSGYLTRRLVDVAQDLVVTEHDCGTEASIEMMPHIEGGDVVEPLRERVLGRILAEPVMDPKSRKELLAKDTFLDERRVDILEEHSIDRVRVRSAITCEARYGICSMCYGRDLARGHVVNVGEAIGVVAAQSIGEPGTQLTMRTFHIGGAASRATAANNIGVKSTGKIKLRNLKTVEQAQGNLVAVSRSGELVVQDLQGSEREHYKVPYGATISVRDGDSVKAGQIVAQWDPHTHPIITEVAGTLRFVDLVDGVTMNRQTDELTGLSSIVITSTKQRSASGKELRPMVKLVDKNDDDLFLPGGKVPAHYFLPEGTFLTKEDGTTVNIGDVLARIPQETSKTRDITGGLPRVADLFEARRPKDAAILAEISGVVSFGKDTKDKGRLIITAPDGTTHEELIPKWRHVSVFEGETVEKGEVIADGPRDPHDILRLLGVNALANYIVNEVQEVYRLQGVKINDKHIEVIVRQMLRKVKITQPGDTDLLQNEQVERTRVREENEKIIKKDGTVAKVEPILLGITKASLATESFISAASFQETTRVLTAASVAGKRDDLRGLKENVIVGRLIPAGTGFSYHQQRRAVAGKSVEEKEIEEKRVTASEAEQALSEALKSSAPQEAKAAQKDE</sequence>
<proteinExistence type="inferred from homology"/>
<accession>A9NAL6</accession>
<evidence type="ECO:0000255" key="1">
    <source>
        <dbReference type="HAMAP-Rule" id="MF_01322"/>
    </source>
</evidence>
<evidence type="ECO:0000256" key="2">
    <source>
        <dbReference type="SAM" id="MobiDB-lite"/>
    </source>
</evidence>
<feature type="chain" id="PRO_0000353342" description="DNA-directed RNA polymerase subunit beta'">
    <location>
        <begin position="1"/>
        <end position="1414"/>
    </location>
</feature>
<feature type="region of interest" description="Disordered" evidence="2">
    <location>
        <begin position="1392"/>
        <end position="1414"/>
    </location>
</feature>
<feature type="compositionally biased region" description="Low complexity" evidence="2">
    <location>
        <begin position="1392"/>
        <end position="1403"/>
    </location>
</feature>
<feature type="binding site" evidence="1">
    <location>
        <position position="70"/>
    </location>
    <ligand>
        <name>Zn(2+)</name>
        <dbReference type="ChEBI" id="CHEBI:29105"/>
        <label>1</label>
    </ligand>
</feature>
<feature type="binding site" evidence="1">
    <location>
        <position position="72"/>
    </location>
    <ligand>
        <name>Zn(2+)</name>
        <dbReference type="ChEBI" id="CHEBI:29105"/>
        <label>1</label>
    </ligand>
</feature>
<feature type="binding site" evidence="1">
    <location>
        <position position="85"/>
    </location>
    <ligand>
        <name>Zn(2+)</name>
        <dbReference type="ChEBI" id="CHEBI:29105"/>
        <label>1</label>
    </ligand>
</feature>
<feature type="binding site" evidence="1">
    <location>
        <position position="88"/>
    </location>
    <ligand>
        <name>Zn(2+)</name>
        <dbReference type="ChEBI" id="CHEBI:29105"/>
        <label>1</label>
    </ligand>
</feature>
<feature type="binding site" evidence="1">
    <location>
        <position position="460"/>
    </location>
    <ligand>
        <name>Mg(2+)</name>
        <dbReference type="ChEBI" id="CHEBI:18420"/>
    </ligand>
</feature>
<feature type="binding site" evidence="1">
    <location>
        <position position="462"/>
    </location>
    <ligand>
        <name>Mg(2+)</name>
        <dbReference type="ChEBI" id="CHEBI:18420"/>
    </ligand>
</feature>
<feature type="binding site" evidence="1">
    <location>
        <position position="464"/>
    </location>
    <ligand>
        <name>Mg(2+)</name>
        <dbReference type="ChEBI" id="CHEBI:18420"/>
    </ligand>
</feature>
<feature type="binding site" evidence="1">
    <location>
        <position position="814"/>
    </location>
    <ligand>
        <name>Zn(2+)</name>
        <dbReference type="ChEBI" id="CHEBI:29105"/>
        <label>2</label>
    </ligand>
</feature>
<feature type="binding site" evidence="1">
    <location>
        <position position="888"/>
    </location>
    <ligand>
        <name>Zn(2+)</name>
        <dbReference type="ChEBI" id="CHEBI:29105"/>
        <label>2</label>
    </ligand>
</feature>
<feature type="binding site" evidence="1">
    <location>
        <position position="895"/>
    </location>
    <ligand>
        <name>Zn(2+)</name>
        <dbReference type="ChEBI" id="CHEBI:29105"/>
        <label>2</label>
    </ligand>
</feature>
<feature type="binding site" evidence="1">
    <location>
        <position position="898"/>
    </location>
    <ligand>
        <name>Zn(2+)</name>
        <dbReference type="ChEBI" id="CHEBI:29105"/>
        <label>2</label>
    </ligand>
</feature>